<sequence length="956" mass="106047">MEVTCLLLLALIPFHCRGQGVYAPAQAQIVHAGQACVVKEDNISERVYTIRESDTLVLQCLVTGHPRPQVRWTKTAGSASDKFQETSVFNETLRIERIARTQGGRYYCKAENGVGVPAIKSIRVDVQYLDEPVLTVHQTVSDVRGNFYQEKTVFLRCTVSSNPPARFIWKRGSDTLSHSQDNGVDIYEPLYTQGETKVLKLKNLRPQDYASYTCQVSVRNVCGIPDKAITFQLTNTTAPPALKLSVNETLVVNPGENVTVQCLLTGGDPLPQLHWSHGPGPLPLGALAQGGTLSIPSVQARDSGYYNCTATNNVGNPAKKTVNLLVRSLKNATFQITPDMIKESENIQLGQDLKLSCHVDAVPQEKVNYQWFKNGKPARTSKRLLVTRNDPELPAVTSSLELIDLHFSDYGTYLCMASFPGSPVPDLSIEVNISSETVPPTISVPKGRAVVTVREGSPAELQCEVRGKPRPPVLWSRVDKEAALLPSGLALEETPDGKLRLESVSRDMSGTYRCQTARYNGFNVRPREAQVQLTVHFPPEVEPSSQDVRQALGRPVLLRCSLLRGSPQRIASAVWRFKGQLLPPPPVLPAAAVETPDHAELRLDALTRDSSGNYECSVSNDVGSATCLFQVSAKAYSPEFYFDTPNPTRSHKLSKNYSYVLQWTQREPDAVDPVLNYRLSIRQLNQHNAMVKAIPVRRVEKGQLLEYILTDLRVPHSYEIRLTPYTTFGAGDMASRIIHYTEPINLPSLSDNTCHFEDEKICGYTQDLTDNFDWTRQNALTQNPKRSPNTGPPTDISGTPEGYYMFIETSRPRELGDRARLVSPLYNASAKFYCVSFFYHMYGKHIGSLNLLVRSRNKGTLDTHAWSLSGNKGNVWQQAHVPINPSGPFQIIFEGVRGSGYLGDIAIDDVTLKKGECPRRQMDPNKVVVMPGSGAPRLSSLQLWGSMAIFLLALQR</sequence>
<evidence type="ECO:0000250" key="1"/>
<evidence type="ECO:0000250" key="2">
    <source>
        <dbReference type="UniProtKB" id="Q8NFP4"/>
    </source>
</evidence>
<evidence type="ECO:0000255" key="3"/>
<evidence type="ECO:0000255" key="4">
    <source>
        <dbReference type="PROSITE-ProRule" id="PRU00114"/>
    </source>
</evidence>
<evidence type="ECO:0000255" key="5">
    <source>
        <dbReference type="PROSITE-ProRule" id="PRU00128"/>
    </source>
</evidence>
<evidence type="ECO:0000255" key="6">
    <source>
        <dbReference type="PROSITE-ProRule" id="PRU00316"/>
    </source>
</evidence>
<evidence type="ECO:0000256" key="7">
    <source>
        <dbReference type="SAM" id="MobiDB-lite"/>
    </source>
</evidence>
<evidence type="ECO:0000269" key="8">
    <source>
    </source>
</evidence>
<evidence type="ECO:0000269" key="9">
    <source>
    </source>
</evidence>
<evidence type="ECO:0000269" key="10">
    <source>
    </source>
</evidence>
<evidence type="ECO:0000305" key="11"/>
<evidence type="ECO:0000312" key="12">
    <source>
        <dbReference type="EMBL" id="ABG78614.1"/>
    </source>
</evidence>
<evidence type="ECO:0000312" key="13">
    <source>
        <dbReference type="MGI" id="MGI:1922012"/>
    </source>
</evidence>
<protein>
    <recommendedName>
        <fullName>MAM domain-containing glycosylphosphatidylinositol anchor protein 1</fullName>
    </recommendedName>
</protein>
<feature type="signal peptide" evidence="3">
    <location>
        <begin position="1"/>
        <end position="18"/>
    </location>
</feature>
<feature type="chain" id="PRO_0000292926" description="MAM domain-containing glycosylphosphatidylinositol anchor protein 1" evidence="3">
    <location>
        <begin position="19"/>
        <end position="933"/>
    </location>
</feature>
<feature type="propeptide" id="PRO_0000292927" description="Removed in mature form" evidence="3">
    <location>
        <begin position="934"/>
        <end position="956"/>
    </location>
</feature>
<feature type="domain" description="Ig-like 1" evidence="3">
    <location>
        <begin position="24"/>
        <end position="123"/>
    </location>
</feature>
<feature type="domain" description="Ig-like 2" evidence="3">
    <location>
        <begin position="132"/>
        <end position="230"/>
    </location>
</feature>
<feature type="domain" description="Ig-like 3" evidence="3">
    <location>
        <begin position="240"/>
        <end position="323"/>
    </location>
</feature>
<feature type="domain" description="Ig-like 4" evidence="3">
    <location>
        <begin position="338"/>
        <end position="432"/>
    </location>
</feature>
<feature type="domain" description="Ig-like 5" evidence="3">
    <location>
        <begin position="440"/>
        <end position="532"/>
    </location>
</feature>
<feature type="domain" description="Ig-like 6" evidence="3">
    <location>
        <begin position="539"/>
        <end position="650"/>
    </location>
</feature>
<feature type="domain" description="Fibronectin type-III" evidence="6">
    <location>
        <begin position="627"/>
        <end position="744"/>
    </location>
</feature>
<feature type="domain" description="MAM" evidence="5">
    <location>
        <begin position="752"/>
        <end position="919"/>
    </location>
</feature>
<feature type="region of interest" description="Disordered" evidence="7">
    <location>
        <begin position="780"/>
        <end position="799"/>
    </location>
</feature>
<feature type="compositionally biased region" description="Polar residues" evidence="7">
    <location>
        <begin position="780"/>
        <end position="789"/>
    </location>
</feature>
<feature type="lipid moiety-binding region" description="GPI-anchor amidated serine" evidence="3">
    <location>
        <position position="933"/>
    </location>
</feature>
<feature type="glycosylation site" description="N-linked (GlcNAc...) asparagine" evidence="3">
    <location>
        <position position="42"/>
    </location>
</feature>
<feature type="glycosylation site" description="N-linked (GlcNAc...) asparagine" evidence="3">
    <location>
        <position position="235"/>
    </location>
</feature>
<feature type="glycosylation site" description="N-linked (GlcNAc...) asparagine" evidence="3">
    <location>
        <position position="247"/>
    </location>
</feature>
<feature type="glycosylation site" description="N-linked (GlcNAc...) asparagine" evidence="3">
    <location>
        <position position="257"/>
    </location>
</feature>
<feature type="glycosylation site" description="N-linked (GlcNAc...) asparagine" evidence="3">
    <location>
        <position position="307"/>
    </location>
</feature>
<feature type="glycosylation site" description="N-linked (GlcNAc...) asparagine" evidence="3">
    <location>
        <position position="432"/>
    </location>
</feature>
<feature type="disulfide bond" evidence="4">
    <location>
        <begin position="60"/>
        <end position="108"/>
    </location>
</feature>
<feature type="disulfide bond" evidence="4">
    <location>
        <begin position="157"/>
        <end position="214"/>
    </location>
</feature>
<feature type="disulfide bond" evidence="4">
    <location>
        <begin position="262"/>
        <end position="308"/>
    </location>
</feature>
<feature type="disulfide bond" evidence="4">
    <location>
        <begin position="357"/>
        <end position="415"/>
    </location>
</feature>
<feature type="disulfide bond" evidence="4">
    <location>
        <begin position="463"/>
        <end position="514"/>
    </location>
</feature>
<feature type="disulfide bond" evidence="4">
    <location>
        <begin position="560"/>
        <end position="616"/>
    </location>
</feature>
<feature type="sequence conflict" description="In Ref. 1; ABG78614." evidence="11" ref="1">
    <original>A</original>
    <variation>T</variation>
    <location>
        <position position="23"/>
    </location>
</feature>
<feature type="sequence conflict" description="In Ref. 1; ABG78614." evidence="11" ref="1">
    <original>AKAYSPEFYFDTPNPTR</original>
    <variation>V</variation>
    <location>
        <begin position="633"/>
        <end position="649"/>
    </location>
</feature>
<accession>Q0PMG2</accession>
<accession>E9PY95</accession>
<accession>E9QP80</accession>
<proteinExistence type="evidence at transcript level"/>
<keyword id="KW-1003">Cell membrane</keyword>
<keyword id="KW-0217">Developmental protein</keyword>
<keyword id="KW-0221">Differentiation</keyword>
<keyword id="KW-1015">Disulfide bond</keyword>
<keyword id="KW-0325">Glycoprotein</keyword>
<keyword id="KW-0336">GPI-anchor</keyword>
<keyword id="KW-0393">Immunoglobulin domain</keyword>
<keyword id="KW-0449">Lipoprotein</keyword>
<keyword id="KW-0472">Membrane</keyword>
<keyword id="KW-0524">Neurogenesis</keyword>
<keyword id="KW-1185">Reference proteome</keyword>
<keyword id="KW-0677">Repeat</keyword>
<keyword id="KW-0732">Signal</keyword>
<gene>
    <name evidence="12 13" type="primary">Mdga1</name>
</gene>
<reference evidence="11 12" key="1">
    <citation type="journal article" date="2006" name="J. Neurosci.">
        <title>Radial migration of superficial layer cortical neurons controlled by novel Ig cell adhesion molecule MDGA1.</title>
        <authorList>
            <person name="Takeuchi A."/>
            <person name="O'Leary D.D.M."/>
        </authorList>
    </citation>
    <scope>NUCLEOTIDE SEQUENCE [MRNA]</scope>
    <scope>FUNCTION</scope>
    <scope>TISSUE SPECIFICITY</scope>
    <scope>DEVELOPMENTAL STAGE</scope>
    <scope>DISRUPTION PHENOTYPE</scope>
    <source>
        <strain evidence="12">C57BL/6J</strain>
        <tissue evidence="12">Brain</tissue>
    </source>
</reference>
<reference key="2">
    <citation type="journal article" date="2009" name="PLoS Biol.">
        <title>Lineage-specific biology revealed by a finished genome assembly of the mouse.</title>
        <authorList>
            <person name="Church D.M."/>
            <person name="Goodstadt L."/>
            <person name="Hillier L.W."/>
            <person name="Zody M.C."/>
            <person name="Goldstein S."/>
            <person name="She X."/>
            <person name="Bult C.J."/>
            <person name="Agarwala R."/>
            <person name="Cherry J.L."/>
            <person name="DiCuccio M."/>
            <person name="Hlavina W."/>
            <person name="Kapustin Y."/>
            <person name="Meric P."/>
            <person name="Maglott D."/>
            <person name="Birtle Z."/>
            <person name="Marques A.C."/>
            <person name="Graves T."/>
            <person name="Zhou S."/>
            <person name="Teague B."/>
            <person name="Potamousis K."/>
            <person name="Churas C."/>
            <person name="Place M."/>
            <person name="Herschleb J."/>
            <person name="Runnheim R."/>
            <person name="Forrest D."/>
            <person name="Amos-Landgraf J."/>
            <person name="Schwartz D.C."/>
            <person name="Cheng Z."/>
            <person name="Lindblad-Toh K."/>
            <person name="Eichler E.E."/>
            <person name="Ponting C.P."/>
        </authorList>
    </citation>
    <scope>NUCLEOTIDE SEQUENCE [LARGE SCALE GENOMIC DNA]</scope>
    <source>
        <strain>C57BL/6J</strain>
    </source>
</reference>
<reference key="3">
    <citation type="submission" date="2003-07" db="EMBL/GenBank/DDBJ databases">
        <authorList>
            <consortium name="The MGC Project Team"/>
        </authorList>
    </citation>
    <scope>NUCLEOTIDE SEQUENCE [LARGE SCALE MRNA] OF 562-818</scope>
</reference>
<reference evidence="11" key="4">
    <citation type="journal article" date="2007" name="Cereb. Cortex">
        <title>Novel IgCAM, MDGA1, expressed in unique cortical area- and layer-specific patterns and transiently by distinct forebrain populations of Cajal-Retzius neurons.</title>
        <authorList>
            <person name="Takeuchi A."/>
            <person name="Hamasaki T."/>
            <person name="Litwack E.D."/>
            <person name="O'leary D.D."/>
        </authorList>
    </citation>
    <scope>TISSUE SPECIFICITY</scope>
</reference>
<reference key="5">
    <citation type="journal article" date="2013" name="Proc. Natl. Acad. Sci. U.S.A.">
        <title>MDGAs interact selectively with neuroligin-2 but not other neuroligins to regulate inhibitory synapse development.</title>
        <authorList>
            <person name="Lee K."/>
            <person name="Kim Y."/>
            <person name="Lee S.-J."/>
            <person name="Qiang Y."/>
            <person name="Lee D."/>
            <person name="Lee H.W."/>
            <person name="Kim H."/>
            <person name="Je H.S."/>
            <person name="Suedhof T.C."/>
            <person name="Ko J."/>
        </authorList>
    </citation>
    <scope>FUNCTION</scope>
</reference>
<name>MDGA1_MOUSE</name>
<organism>
    <name type="scientific">Mus musculus</name>
    <name type="common">Mouse</name>
    <dbReference type="NCBI Taxonomy" id="10090"/>
    <lineage>
        <taxon>Eukaryota</taxon>
        <taxon>Metazoa</taxon>
        <taxon>Chordata</taxon>
        <taxon>Craniata</taxon>
        <taxon>Vertebrata</taxon>
        <taxon>Euteleostomi</taxon>
        <taxon>Mammalia</taxon>
        <taxon>Eutheria</taxon>
        <taxon>Euarchontoglires</taxon>
        <taxon>Glires</taxon>
        <taxon>Rodentia</taxon>
        <taxon>Myomorpha</taxon>
        <taxon>Muroidea</taxon>
        <taxon>Muridae</taxon>
        <taxon>Murinae</taxon>
        <taxon>Mus</taxon>
        <taxon>Mus</taxon>
    </lineage>
</organism>
<dbReference type="EMBL" id="DQ788983">
    <property type="protein sequence ID" value="ABG78614.1"/>
    <property type="molecule type" value="mRNA"/>
</dbReference>
<dbReference type="EMBL" id="AC151294">
    <property type="status" value="NOT_ANNOTATED_CDS"/>
    <property type="molecule type" value="Genomic_DNA"/>
</dbReference>
<dbReference type="EMBL" id="AC154291">
    <property type="status" value="NOT_ANNOTATED_CDS"/>
    <property type="molecule type" value="Genomic_DNA"/>
</dbReference>
<dbReference type="EMBL" id="CD352497">
    <property type="status" value="NOT_ANNOTATED_CDS"/>
    <property type="molecule type" value="mRNA"/>
</dbReference>
<dbReference type="CCDS" id="CCDS89052.1"/>
<dbReference type="RefSeq" id="NP_001355352.1">
    <property type="nucleotide sequence ID" value="NM_001368423.1"/>
</dbReference>
<dbReference type="RefSeq" id="XP_006525103.1">
    <property type="nucleotide sequence ID" value="XM_006525040.3"/>
</dbReference>
<dbReference type="SMR" id="Q0PMG2"/>
<dbReference type="FunCoup" id="Q0PMG2">
    <property type="interactions" value="258"/>
</dbReference>
<dbReference type="STRING" id="10090.ENSMUSP00000073246"/>
<dbReference type="GlyConnect" id="2500">
    <property type="glycosylation" value="5 N-Linked glycans (3 sites)"/>
</dbReference>
<dbReference type="GlyCosmos" id="Q0PMG2">
    <property type="glycosylation" value="8 sites, 5 glycans"/>
</dbReference>
<dbReference type="GlyGen" id="Q0PMG2">
    <property type="glycosylation" value="11 sites, 11 N-linked glycans (7 sites), 1 O-linked glycan (1 site)"/>
</dbReference>
<dbReference type="iPTMnet" id="Q0PMG2"/>
<dbReference type="PhosphoSitePlus" id="Q0PMG2"/>
<dbReference type="SwissPalm" id="Q0PMG2"/>
<dbReference type="PaxDb" id="10090-ENSMUSP00000126529"/>
<dbReference type="ProteomicsDB" id="292203"/>
<dbReference type="ProteomicsDB" id="355368"/>
<dbReference type="Antibodypedia" id="29838">
    <property type="antibodies" value="31 antibodies from 13 providers"/>
</dbReference>
<dbReference type="Ensembl" id="ENSMUST00000171691.9">
    <property type="protein sequence ID" value="ENSMUSP00000126529.2"/>
    <property type="gene ID" value="ENSMUSG00000043557.17"/>
</dbReference>
<dbReference type="GeneID" id="74762"/>
<dbReference type="AGR" id="MGI:1922012"/>
<dbReference type="MGI" id="MGI:1922012">
    <property type="gene designation" value="Mdga1"/>
</dbReference>
<dbReference type="VEuPathDB" id="HostDB:ENSMUSG00000043557"/>
<dbReference type="eggNOG" id="ENOG502QUWH">
    <property type="taxonomic scope" value="Eukaryota"/>
</dbReference>
<dbReference type="GeneTree" id="ENSGT00940000159201"/>
<dbReference type="InParanoid" id="Q0PMG2"/>
<dbReference type="OrthoDB" id="6107927at2759"/>
<dbReference type="TreeFam" id="TF330345"/>
<dbReference type="Reactome" id="R-MMU-163125">
    <property type="pathway name" value="Post-translational modification: synthesis of GPI-anchored proteins"/>
</dbReference>
<dbReference type="BioGRID-ORCS" id="74762">
    <property type="hits" value="3 hits in 80 CRISPR screens"/>
</dbReference>
<dbReference type="ChiTaRS" id="Mdga1">
    <property type="organism name" value="mouse"/>
</dbReference>
<dbReference type="PRO" id="PR:Q0PMG2"/>
<dbReference type="Proteomes" id="UP000000589">
    <property type="component" value="Chromosome 17"/>
</dbReference>
<dbReference type="RNAct" id="Q0PMG2">
    <property type="molecule type" value="protein"/>
</dbReference>
<dbReference type="Bgee" id="ENSMUSG00000043557">
    <property type="expression patterns" value="Expressed in neural tube mantle layer and 106 other cell types or tissues"/>
</dbReference>
<dbReference type="ExpressionAtlas" id="Q0PMG2">
    <property type="expression patterns" value="baseline and differential"/>
</dbReference>
<dbReference type="GO" id="GO:0030424">
    <property type="term" value="C:axon"/>
    <property type="evidence" value="ECO:0000314"/>
    <property type="project" value="MGI"/>
</dbReference>
<dbReference type="GO" id="GO:0009986">
    <property type="term" value="C:cell surface"/>
    <property type="evidence" value="ECO:0000314"/>
    <property type="project" value="MGI"/>
</dbReference>
<dbReference type="GO" id="GO:0030425">
    <property type="term" value="C:dendrite"/>
    <property type="evidence" value="ECO:0000314"/>
    <property type="project" value="MGI"/>
</dbReference>
<dbReference type="GO" id="GO:0098982">
    <property type="term" value="C:GABA-ergic synapse"/>
    <property type="evidence" value="ECO:0007669"/>
    <property type="project" value="Ensembl"/>
</dbReference>
<dbReference type="GO" id="GO:0005794">
    <property type="term" value="C:Golgi apparatus"/>
    <property type="evidence" value="ECO:0007669"/>
    <property type="project" value="Ensembl"/>
</dbReference>
<dbReference type="GO" id="GO:0045121">
    <property type="term" value="C:membrane raft"/>
    <property type="evidence" value="ECO:0000266"/>
    <property type="project" value="MGI"/>
</dbReference>
<dbReference type="GO" id="GO:0005886">
    <property type="term" value="C:plasma membrane"/>
    <property type="evidence" value="ECO:0000250"/>
    <property type="project" value="UniProtKB"/>
</dbReference>
<dbReference type="GO" id="GO:0098552">
    <property type="term" value="C:side of membrane"/>
    <property type="evidence" value="ECO:0007669"/>
    <property type="project" value="UniProtKB-KW"/>
</dbReference>
<dbReference type="GO" id="GO:0021799">
    <property type="term" value="P:cerebral cortex radially oriented cell migration"/>
    <property type="evidence" value="ECO:0000315"/>
    <property type="project" value="MGI"/>
</dbReference>
<dbReference type="GO" id="GO:0042417">
    <property type="term" value="P:dopamine metabolic process"/>
    <property type="evidence" value="ECO:0000315"/>
    <property type="project" value="MGI"/>
</dbReference>
<dbReference type="GO" id="GO:1904862">
    <property type="term" value="P:inhibitory synapse assembly"/>
    <property type="evidence" value="ECO:0000314"/>
    <property type="project" value="MGI"/>
</dbReference>
<dbReference type="GO" id="GO:0001764">
    <property type="term" value="P:neuron migration"/>
    <property type="evidence" value="ECO:0000314"/>
    <property type="project" value="UniProtKB"/>
</dbReference>
<dbReference type="GO" id="GO:0060134">
    <property type="term" value="P:prepulse inhibition"/>
    <property type="evidence" value="ECO:0000315"/>
    <property type="project" value="MGI"/>
</dbReference>
<dbReference type="GO" id="GO:0099054">
    <property type="term" value="P:presynapse assembly"/>
    <property type="evidence" value="ECO:0000314"/>
    <property type="project" value="MGI"/>
</dbReference>
<dbReference type="GO" id="GO:1905606">
    <property type="term" value="P:regulation of presynapse assembly"/>
    <property type="evidence" value="ECO:0007669"/>
    <property type="project" value="Ensembl"/>
</dbReference>
<dbReference type="GO" id="GO:0099179">
    <property type="term" value="P:regulation of synaptic membrane adhesion"/>
    <property type="evidence" value="ECO:0007669"/>
    <property type="project" value="Ensembl"/>
</dbReference>
<dbReference type="GO" id="GO:0042428">
    <property type="term" value="P:serotonin metabolic process"/>
    <property type="evidence" value="ECO:0000315"/>
    <property type="project" value="MGI"/>
</dbReference>
<dbReference type="CDD" id="cd00096">
    <property type="entry name" value="Ig"/>
    <property type="match status" value="2"/>
</dbReference>
<dbReference type="CDD" id="cd06263">
    <property type="entry name" value="MAM"/>
    <property type="match status" value="1"/>
</dbReference>
<dbReference type="FunFam" id="2.60.40.10:FF:000240">
    <property type="entry name" value="MAM domain containing glycosylphosphatidylinositol anchor 1"/>
    <property type="match status" value="1"/>
</dbReference>
<dbReference type="FunFam" id="2.60.40.10:FF:000262">
    <property type="entry name" value="MAM domain containing glycosylphosphatidylinositol anchor 1"/>
    <property type="match status" value="1"/>
</dbReference>
<dbReference type="FunFam" id="2.60.40.10:FF:000303">
    <property type="entry name" value="MAM domain containing glycosylphosphatidylinositol anchor 1"/>
    <property type="match status" value="1"/>
</dbReference>
<dbReference type="FunFam" id="2.60.40.10:FF:001352">
    <property type="entry name" value="MAM domain containing glycosylphosphatidylinositol anchor 1"/>
    <property type="match status" value="1"/>
</dbReference>
<dbReference type="FunFam" id="2.60.120.200:FF:000019">
    <property type="entry name" value="MAM domain containing glycosylphosphatidylinositol anchor 2"/>
    <property type="match status" value="1"/>
</dbReference>
<dbReference type="FunFam" id="2.60.40.10:FF:000165">
    <property type="entry name" value="MAM domain containing glycosylphosphatidylinositol anchor 2"/>
    <property type="match status" value="1"/>
</dbReference>
<dbReference type="FunFam" id="2.60.40.10:FF:000243">
    <property type="entry name" value="MAM domain-containing glycosylphosphatidylinositol anchor protein 1"/>
    <property type="match status" value="1"/>
</dbReference>
<dbReference type="FunFam" id="2.60.40.10:FF:001287">
    <property type="entry name" value="MAM domain-containing glycosylphosphatidylinositol anchor protein 1"/>
    <property type="match status" value="1"/>
</dbReference>
<dbReference type="Gene3D" id="2.60.120.200">
    <property type="match status" value="1"/>
</dbReference>
<dbReference type="Gene3D" id="2.60.40.10">
    <property type="entry name" value="Immunoglobulins"/>
    <property type="match status" value="7"/>
</dbReference>
<dbReference type="InterPro" id="IPR050958">
    <property type="entry name" value="Cell_Adh-Cytoskel_Orgn"/>
</dbReference>
<dbReference type="InterPro" id="IPR013320">
    <property type="entry name" value="ConA-like_dom_sf"/>
</dbReference>
<dbReference type="InterPro" id="IPR003961">
    <property type="entry name" value="FN3_dom"/>
</dbReference>
<dbReference type="InterPro" id="IPR036116">
    <property type="entry name" value="FN3_sf"/>
</dbReference>
<dbReference type="InterPro" id="IPR007110">
    <property type="entry name" value="Ig-like_dom"/>
</dbReference>
<dbReference type="InterPro" id="IPR036179">
    <property type="entry name" value="Ig-like_dom_sf"/>
</dbReference>
<dbReference type="InterPro" id="IPR013783">
    <property type="entry name" value="Ig-like_fold"/>
</dbReference>
<dbReference type="InterPro" id="IPR013098">
    <property type="entry name" value="Ig_I-set"/>
</dbReference>
<dbReference type="InterPro" id="IPR003599">
    <property type="entry name" value="Ig_sub"/>
</dbReference>
<dbReference type="InterPro" id="IPR003598">
    <property type="entry name" value="Ig_sub2"/>
</dbReference>
<dbReference type="InterPro" id="IPR000998">
    <property type="entry name" value="MAM_dom"/>
</dbReference>
<dbReference type="PANTHER" id="PTHR45080">
    <property type="entry name" value="CONTACTIN 5"/>
    <property type="match status" value="1"/>
</dbReference>
<dbReference type="PANTHER" id="PTHR45080:SF32">
    <property type="entry name" value="MAM DOMAIN CONTAINING GLYCOSYLPHOSPHATIDYLINOSITOL ANCHOR 1"/>
    <property type="match status" value="1"/>
</dbReference>
<dbReference type="Pfam" id="PF07679">
    <property type="entry name" value="I-set"/>
    <property type="match status" value="1"/>
</dbReference>
<dbReference type="Pfam" id="PF13927">
    <property type="entry name" value="Ig_3"/>
    <property type="match status" value="5"/>
</dbReference>
<dbReference type="Pfam" id="PF00629">
    <property type="entry name" value="MAM"/>
    <property type="match status" value="1"/>
</dbReference>
<dbReference type="SMART" id="SM00409">
    <property type="entry name" value="IG"/>
    <property type="match status" value="6"/>
</dbReference>
<dbReference type="SMART" id="SM00408">
    <property type="entry name" value="IGc2"/>
    <property type="match status" value="6"/>
</dbReference>
<dbReference type="SMART" id="SM00137">
    <property type="entry name" value="MAM"/>
    <property type="match status" value="1"/>
</dbReference>
<dbReference type="SUPFAM" id="SSF49899">
    <property type="entry name" value="Concanavalin A-like lectins/glucanases"/>
    <property type="match status" value="1"/>
</dbReference>
<dbReference type="SUPFAM" id="SSF49265">
    <property type="entry name" value="Fibronectin type III"/>
    <property type="match status" value="1"/>
</dbReference>
<dbReference type="SUPFAM" id="SSF48726">
    <property type="entry name" value="Immunoglobulin"/>
    <property type="match status" value="6"/>
</dbReference>
<dbReference type="PROSITE" id="PS50853">
    <property type="entry name" value="FN3"/>
    <property type="match status" value="1"/>
</dbReference>
<dbReference type="PROSITE" id="PS50835">
    <property type="entry name" value="IG_LIKE"/>
    <property type="match status" value="6"/>
</dbReference>
<dbReference type="PROSITE" id="PS50060">
    <property type="entry name" value="MAM_2"/>
    <property type="match status" value="1"/>
</dbReference>
<comment type="function">
    <text evidence="8 10">Required for radial migration of cortical neurons in the superficial layer of the neocortex. Plays a role in the formation or maintenance of inhibitory synapses. May function by inhibiting the activity of NLGN2.</text>
</comment>
<comment type="subunit">
    <text evidence="1">Interacts heterophilically through its MAM domain with proteins in axon-rich regions and through its Ig-like domains with proteins in differentiating muscle. Interacts (through the Ig-like domains) with NLGN2.</text>
</comment>
<comment type="subcellular location">
    <subcellularLocation>
        <location evidence="1">Cell membrane</location>
        <topology evidence="1">Lipid-anchor</topology>
        <topology evidence="1">GPI-anchor</topology>
    </subcellularLocation>
    <text evidence="2">Associated with lipid rafts.</text>
</comment>
<comment type="tissue specificity">
    <text evidence="8 9">Expressed by neurons in layers 2 and 3 of the cortex during their migration and settling in the cortical plate. Also found in layers 4 and 6a. From 9.5 dpc-13.5 dpc, detected in the marginal zone of the developing cortex. At 16.5 dpc, modest expression is found in the intermediate zone. At postnatal day 1, evident in the superficial cortical plate. By postnatal day 7, expression is limited to layers 2 and 3 throughout most of the cortex.</text>
</comment>
<comment type="developmental stage">
    <text evidence="8">Expressed in the developing embryo and soon after birth but not detected in adults.</text>
</comment>
<comment type="disruption phenotype">
    <text evidence="8">Mice display impaired migration of superficial layer cortical neurons with neurons found deep in the cortical plate or beneath it.</text>
</comment>